<keyword id="KW-0067">ATP-binding</keyword>
<keyword id="KW-0963">Cytoplasm</keyword>
<keyword id="KW-0418">Kinase</keyword>
<keyword id="KW-0547">Nucleotide-binding</keyword>
<keyword id="KW-1185">Reference proteome</keyword>
<keyword id="KW-0808">Transferase</keyword>
<protein>
    <recommendedName>
        <fullName evidence="1">Guanylate kinase</fullName>
        <ecNumber evidence="1">2.7.4.8</ecNumber>
    </recommendedName>
    <alternativeName>
        <fullName evidence="1">GMP kinase</fullName>
    </alternativeName>
</protein>
<sequence>MEEKNKKGKIIIISGPSGVGKKTIIDQVINNVDLNLTYSISMTTRLPREHEKNGVDYFFVSEEEFNSAIEKGELLEWAEFANNKYGTPIKNLYKLIGENKNVILEIEVQGATKVKDILNREDYISIFLIPPSIRELKRRLKIRDTETKEKIKQRIKRAKVELKLQNEYDFIILNDDAKNAADKLRHILYEKVLEKK</sequence>
<comment type="function">
    <text evidence="1">Essential for recycling GMP and indirectly, cGMP.</text>
</comment>
<comment type="catalytic activity">
    <reaction evidence="1">
        <text>GMP + ATP = GDP + ADP</text>
        <dbReference type="Rhea" id="RHEA:20780"/>
        <dbReference type="ChEBI" id="CHEBI:30616"/>
        <dbReference type="ChEBI" id="CHEBI:58115"/>
        <dbReference type="ChEBI" id="CHEBI:58189"/>
        <dbReference type="ChEBI" id="CHEBI:456216"/>
        <dbReference type="EC" id="2.7.4.8"/>
    </reaction>
</comment>
<comment type="subcellular location">
    <subcellularLocation>
        <location evidence="1">Cytoplasm</location>
    </subcellularLocation>
</comment>
<comment type="similarity">
    <text evidence="1">Belongs to the guanylate kinase family.</text>
</comment>
<evidence type="ECO:0000255" key="1">
    <source>
        <dbReference type="HAMAP-Rule" id="MF_00328"/>
    </source>
</evidence>
<gene>
    <name evidence="1" type="primary">gmk</name>
    <name type="ordered locus">MYPE5640</name>
</gene>
<accession>Q8EVJ9</accession>
<name>KGUA_MALP2</name>
<proteinExistence type="inferred from homology"/>
<organism>
    <name type="scientific">Malacoplasma penetrans (strain HF-2)</name>
    <name type="common">Mycoplasma penetrans</name>
    <dbReference type="NCBI Taxonomy" id="272633"/>
    <lineage>
        <taxon>Bacteria</taxon>
        <taxon>Bacillati</taxon>
        <taxon>Mycoplasmatota</taxon>
        <taxon>Mycoplasmoidales</taxon>
        <taxon>Mycoplasmoidaceae</taxon>
        <taxon>Malacoplasma</taxon>
    </lineage>
</organism>
<dbReference type="EC" id="2.7.4.8" evidence="1"/>
<dbReference type="EMBL" id="BA000026">
    <property type="protein sequence ID" value="BAC44354.1"/>
    <property type="molecule type" value="Genomic_DNA"/>
</dbReference>
<dbReference type="RefSeq" id="WP_011077387.1">
    <property type="nucleotide sequence ID" value="NC_004432.1"/>
</dbReference>
<dbReference type="SMR" id="Q8EVJ9"/>
<dbReference type="FunCoup" id="Q8EVJ9">
    <property type="interactions" value="222"/>
</dbReference>
<dbReference type="STRING" id="272633.gene:10731681"/>
<dbReference type="KEGG" id="mpe:MYPE5640"/>
<dbReference type="eggNOG" id="COG0194">
    <property type="taxonomic scope" value="Bacteria"/>
</dbReference>
<dbReference type="HOGENOM" id="CLU_001715_1_2_14"/>
<dbReference type="InParanoid" id="Q8EVJ9"/>
<dbReference type="Proteomes" id="UP000002522">
    <property type="component" value="Chromosome"/>
</dbReference>
<dbReference type="GO" id="GO:0005829">
    <property type="term" value="C:cytosol"/>
    <property type="evidence" value="ECO:0007669"/>
    <property type="project" value="TreeGrafter"/>
</dbReference>
<dbReference type="GO" id="GO:0005524">
    <property type="term" value="F:ATP binding"/>
    <property type="evidence" value="ECO:0007669"/>
    <property type="project" value="UniProtKB-UniRule"/>
</dbReference>
<dbReference type="GO" id="GO:0004385">
    <property type="term" value="F:guanylate kinase activity"/>
    <property type="evidence" value="ECO:0007669"/>
    <property type="project" value="UniProtKB-UniRule"/>
</dbReference>
<dbReference type="CDD" id="cd00071">
    <property type="entry name" value="GMPK"/>
    <property type="match status" value="1"/>
</dbReference>
<dbReference type="FunFam" id="3.30.63.10:FF:000002">
    <property type="entry name" value="Guanylate kinase 1"/>
    <property type="match status" value="1"/>
</dbReference>
<dbReference type="Gene3D" id="3.30.63.10">
    <property type="entry name" value="Guanylate Kinase phosphate binding domain"/>
    <property type="match status" value="1"/>
</dbReference>
<dbReference type="Gene3D" id="3.40.50.300">
    <property type="entry name" value="P-loop containing nucleotide triphosphate hydrolases"/>
    <property type="match status" value="2"/>
</dbReference>
<dbReference type="HAMAP" id="MF_00328">
    <property type="entry name" value="Guanylate_kinase"/>
    <property type="match status" value="1"/>
</dbReference>
<dbReference type="InterPro" id="IPR008145">
    <property type="entry name" value="GK/Ca_channel_bsu"/>
</dbReference>
<dbReference type="InterPro" id="IPR008144">
    <property type="entry name" value="Guanylate_kin-like_dom"/>
</dbReference>
<dbReference type="InterPro" id="IPR017665">
    <property type="entry name" value="Guanylate_kinase"/>
</dbReference>
<dbReference type="InterPro" id="IPR020590">
    <property type="entry name" value="Guanylate_kinase_CS"/>
</dbReference>
<dbReference type="InterPro" id="IPR027417">
    <property type="entry name" value="P-loop_NTPase"/>
</dbReference>
<dbReference type="NCBIfam" id="TIGR03263">
    <property type="entry name" value="guanyl_kin"/>
    <property type="match status" value="1"/>
</dbReference>
<dbReference type="PANTHER" id="PTHR23117:SF13">
    <property type="entry name" value="GUANYLATE KINASE"/>
    <property type="match status" value="1"/>
</dbReference>
<dbReference type="PANTHER" id="PTHR23117">
    <property type="entry name" value="GUANYLATE KINASE-RELATED"/>
    <property type="match status" value="1"/>
</dbReference>
<dbReference type="Pfam" id="PF00625">
    <property type="entry name" value="Guanylate_kin"/>
    <property type="match status" value="1"/>
</dbReference>
<dbReference type="SMART" id="SM00072">
    <property type="entry name" value="GuKc"/>
    <property type="match status" value="1"/>
</dbReference>
<dbReference type="SUPFAM" id="SSF52540">
    <property type="entry name" value="P-loop containing nucleoside triphosphate hydrolases"/>
    <property type="match status" value="1"/>
</dbReference>
<dbReference type="PROSITE" id="PS00856">
    <property type="entry name" value="GUANYLATE_KINASE_1"/>
    <property type="match status" value="1"/>
</dbReference>
<dbReference type="PROSITE" id="PS50052">
    <property type="entry name" value="GUANYLATE_KINASE_2"/>
    <property type="match status" value="1"/>
</dbReference>
<feature type="chain" id="PRO_0000170567" description="Guanylate kinase">
    <location>
        <begin position="1"/>
        <end position="196"/>
    </location>
</feature>
<feature type="domain" description="Guanylate kinase-like" evidence="1">
    <location>
        <begin position="8"/>
        <end position="189"/>
    </location>
</feature>
<feature type="binding site" evidence="1">
    <location>
        <begin position="15"/>
        <end position="22"/>
    </location>
    <ligand>
        <name>ATP</name>
        <dbReference type="ChEBI" id="CHEBI:30616"/>
    </ligand>
</feature>
<reference key="1">
    <citation type="journal article" date="2002" name="Nucleic Acids Res.">
        <title>The complete genomic sequence of Mycoplasma penetrans, an intracellular bacterial pathogen in humans.</title>
        <authorList>
            <person name="Sasaki Y."/>
            <person name="Ishikawa J."/>
            <person name="Yamashita A."/>
            <person name="Oshima K."/>
            <person name="Kenri T."/>
            <person name="Furuya K."/>
            <person name="Yoshino C."/>
            <person name="Horino A."/>
            <person name="Shiba T."/>
            <person name="Sasaki T."/>
            <person name="Hattori M."/>
        </authorList>
    </citation>
    <scope>NUCLEOTIDE SEQUENCE [LARGE SCALE GENOMIC DNA]</scope>
    <source>
        <strain>HF-2</strain>
    </source>
</reference>